<evidence type="ECO:0000255" key="1">
    <source>
        <dbReference type="HAMAP-Rule" id="MF_01805"/>
    </source>
</evidence>
<reference key="1">
    <citation type="journal article" date="2004" name="Nat. Biotechnol.">
        <title>Complete sequence and comparative genome analysis of the dairy bacterium Streptococcus thermophilus.</title>
        <authorList>
            <person name="Bolotin A."/>
            <person name="Quinquis B."/>
            <person name="Renault P."/>
            <person name="Sorokin A."/>
            <person name="Ehrlich S.D."/>
            <person name="Kulakauskas S."/>
            <person name="Lapidus A."/>
            <person name="Goltsman E."/>
            <person name="Mazur M."/>
            <person name="Pusch G.D."/>
            <person name="Fonstein M."/>
            <person name="Overbeek R."/>
            <person name="Kyprides N."/>
            <person name="Purnelle B."/>
            <person name="Prozzi D."/>
            <person name="Ngui K."/>
            <person name="Masuy D."/>
            <person name="Hancy F."/>
            <person name="Burteau S."/>
            <person name="Boutry M."/>
            <person name="Delcour J."/>
            <person name="Goffeau A."/>
            <person name="Hols P."/>
        </authorList>
    </citation>
    <scope>NUCLEOTIDE SEQUENCE [LARGE SCALE GENOMIC DNA]</scope>
    <source>
        <strain>CNRZ 1066</strain>
    </source>
</reference>
<name>SCPA_STRT1</name>
<keyword id="KW-0131">Cell cycle</keyword>
<keyword id="KW-0132">Cell division</keyword>
<keyword id="KW-0159">Chromosome partition</keyword>
<keyword id="KW-0963">Cytoplasm</keyword>
<gene>
    <name evidence="1" type="primary">scpA</name>
    <name type="ordered locus">str0260</name>
</gene>
<proteinExistence type="inferred from homology"/>
<organism>
    <name type="scientific">Streptococcus thermophilus (strain CNRZ 1066)</name>
    <dbReference type="NCBI Taxonomy" id="299768"/>
    <lineage>
        <taxon>Bacteria</taxon>
        <taxon>Bacillati</taxon>
        <taxon>Bacillota</taxon>
        <taxon>Bacilli</taxon>
        <taxon>Lactobacillales</taxon>
        <taxon>Streptococcaceae</taxon>
        <taxon>Streptococcus</taxon>
    </lineage>
</organism>
<protein>
    <recommendedName>
        <fullName evidence="1">Segregation and condensation protein A</fullName>
    </recommendedName>
</protein>
<comment type="function">
    <text evidence="1">Participates in chromosomal partition during cell division. May act via the formation of a condensin-like complex containing Smc and ScpB that pull DNA away from mid-cell into both cell halves.</text>
</comment>
<comment type="subunit">
    <text evidence="1">Component of a cohesin-like complex composed of ScpA, ScpB and the Smc homodimer, in which ScpA and ScpB bind to the head domain of Smc. The presence of the three proteins is required for the association of the complex with DNA.</text>
</comment>
<comment type="subcellular location">
    <subcellularLocation>
        <location evidence="1">Cytoplasm</location>
    </subcellularLocation>
    <text evidence="1">Associated with two foci at the outer edges of the nucleoid region in young cells, and at four foci within both cell halves in older cells.</text>
</comment>
<comment type="similarity">
    <text evidence="1">Belongs to the ScpA family.</text>
</comment>
<accession>Q5M1I0</accession>
<dbReference type="EMBL" id="CP000024">
    <property type="protein sequence ID" value="AAV61873.1"/>
    <property type="molecule type" value="Genomic_DNA"/>
</dbReference>
<dbReference type="RefSeq" id="WP_011226851.1">
    <property type="nucleotide sequence ID" value="NC_006449.1"/>
</dbReference>
<dbReference type="SMR" id="Q5M1I0"/>
<dbReference type="KEGG" id="stc:str0260"/>
<dbReference type="HOGENOM" id="CLU_038686_3_3_9"/>
<dbReference type="GO" id="GO:0005737">
    <property type="term" value="C:cytoplasm"/>
    <property type="evidence" value="ECO:0007669"/>
    <property type="project" value="UniProtKB-SubCell"/>
</dbReference>
<dbReference type="GO" id="GO:0051301">
    <property type="term" value="P:cell division"/>
    <property type="evidence" value="ECO:0007669"/>
    <property type="project" value="UniProtKB-KW"/>
</dbReference>
<dbReference type="GO" id="GO:0007059">
    <property type="term" value="P:chromosome segregation"/>
    <property type="evidence" value="ECO:0007669"/>
    <property type="project" value="UniProtKB-UniRule"/>
</dbReference>
<dbReference type="GO" id="GO:0006260">
    <property type="term" value="P:DNA replication"/>
    <property type="evidence" value="ECO:0007669"/>
    <property type="project" value="UniProtKB-UniRule"/>
</dbReference>
<dbReference type="Gene3D" id="6.10.250.2410">
    <property type="match status" value="1"/>
</dbReference>
<dbReference type="HAMAP" id="MF_01805">
    <property type="entry name" value="ScpA"/>
    <property type="match status" value="1"/>
</dbReference>
<dbReference type="InterPro" id="IPR003768">
    <property type="entry name" value="ScpA"/>
</dbReference>
<dbReference type="NCBIfam" id="NF000993">
    <property type="entry name" value="PRK00104.1-2"/>
    <property type="match status" value="1"/>
</dbReference>
<dbReference type="PANTHER" id="PTHR33969">
    <property type="entry name" value="SEGREGATION AND CONDENSATION PROTEIN A"/>
    <property type="match status" value="1"/>
</dbReference>
<dbReference type="PANTHER" id="PTHR33969:SF2">
    <property type="entry name" value="SEGREGATION AND CONDENSATION PROTEIN A"/>
    <property type="match status" value="1"/>
</dbReference>
<dbReference type="Pfam" id="PF02616">
    <property type="entry name" value="SMC_ScpA"/>
    <property type="match status" value="1"/>
</dbReference>
<sequence>MDIKLKDFEGPLDLLLHLVSKYEVDIYDVPIVEVIEQYLAYLATLQAMKLEVAGEYMLMASQLMLIKSRKLLPTVVEDEPEVDDPELELLSQLEEYAHFKAASQVLAKKHEVRAQYFSKPKVELVYEDVTLNQDKTIQDIFLAFSKIMAEKQEEIRRRHTTIARDDYKIEDMMLIIEEAFSAKNKLFLDELFSDAKDMNQVITLFLATLELIKIHRISVQQETIFGTITLRKEWTNE</sequence>
<feature type="chain" id="PRO_1000069989" description="Segregation and condensation protein A">
    <location>
        <begin position="1"/>
        <end position="237"/>
    </location>
</feature>